<dbReference type="GO" id="GO:0005576">
    <property type="term" value="C:extracellular region"/>
    <property type="evidence" value="ECO:0007669"/>
    <property type="project" value="UniProtKB-SubCell"/>
</dbReference>
<dbReference type="GO" id="GO:0090729">
    <property type="term" value="F:toxin activity"/>
    <property type="evidence" value="ECO:0007669"/>
    <property type="project" value="UniProtKB-KW"/>
</dbReference>
<accession>P0DUA9</accession>
<feature type="signal peptide" evidence="1">
    <location>
        <begin position="1"/>
        <end position="20"/>
    </location>
</feature>
<feature type="chain" id="PRO_0000450991" description="Contryphan-Cal4" evidence="3">
    <location>
        <begin position="21"/>
        <end position="39"/>
    </location>
</feature>
<feature type="disulfide bond" evidence="3">
    <location>
        <begin position="29"/>
        <end position="35"/>
    </location>
</feature>
<comment type="function">
    <text evidence="3">Probable neurotoxin.</text>
</comment>
<comment type="subcellular location">
    <subcellularLocation>
        <location evidence="4">Secreted</location>
    </subcellularLocation>
</comment>
<comment type="tissue specificity">
    <text evidence="4">Expressed by the venom duct.</text>
</comment>
<comment type="domain">
    <text evidence="3">The cysteine framework is C-C.</text>
</comment>
<reference key="1">
    <citation type="journal article" date="2019" name="Toxins">
        <title>The diversified O-superfamily in Californiconus californicus presents a conotoxin with antimycobacterial activity.</title>
        <authorList>
            <person name="Bernaldez-Sarabia J."/>
            <person name="Figueroa-Montiel A."/>
            <person name="Duenas S."/>
            <person name="Cervantes-Luevano K."/>
            <person name="Beltran J.A."/>
            <person name="Ortiz E."/>
            <person name="Jimenez S."/>
            <person name="Possani L.D."/>
            <person name="Paniagua-Solis J.F."/>
            <person name="Gonzalez-Canudas J."/>
            <person name="Licea-Navarro A."/>
        </authorList>
    </citation>
    <scope>NUCLEOTIDE SEQUENCE [MRNA]</scope>
    <source>
        <tissue>Venom duct</tissue>
    </source>
</reference>
<keyword id="KW-1015">Disulfide bond</keyword>
<keyword id="KW-0528">Neurotoxin</keyword>
<keyword id="KW-0964">Secreted</keyword>
<keyword id="KW-0732">Signal</keyword>
<keyword id="KW-0800">Toxin</keyword>
<protein>
    <recommendedName>
        <fullName evidence="3">Contryphan-Cal4</fullName>
    </recommendedName>
    <alternativeName>
        <fullName evidence="2">O3_contryphan-like cal4</fullName>
    </alternativeName>
</protein>
<evidence type="ECO:0000255" key="1"/>
<evidence type="ECO:0000303" key="2">
    <source>
    </source>
</evidence>
<evidence type="ECO:0000305" key="3"/>
<evidence type="ECO:0000305" key="4">
    <source>
    </source>
</evidence>
<name>COW4_CONCL</name>
<organism>
    <name type="scientific">Californiconus californicus</name>
    <name type="common">California cone</name>
    <name type="synonym">Conus californicus</name>
    <dbReference type="NCBI Taxonomy" id="1736779"/>
    <lineage>
        <taxon>Eukaryota</taxon>
        <taxon>Metazoa</taxon>
        <taxon>Spiralia</taxon>
        <taxon>Lophotrochozoa</taxon>
        <taxon>Mollusca</taxon>
        <taxon>Gastropoda</taxon>
        <taxon>Caenogastropoda</taxon>
        <taxon>Neogastropoda</taxon>
        <taxon>Conoidea</taxon>
        <taxon>Conidae</taxon>
        <taxon>Californiconus</taxon>
    </lineage>
</organism>
<sequence length="39" mass="4558">MTRTAVLLLTLLFLVAMAASDKIKTREVCWNEEECENWE</sequence>
<proteinExistence type="inferred from homology"/>